<name>Y2834_BACAN</name>
<evidence type="ECO:0000305" key="1"/>
<protein>
    <recommendedName>
        <fullName>Uncharacterized protein BA_2834/GBAA_2834/BAS2643</fullName>
    </recommendedName>
</protein>
<feature type="chain" id="PRO_0000354036" description="Uncharacterized protein BA_2834/GBAA_2834/BAS2643">
    <location>
        <begin position="1"/>
        <end position="345"/>
    </location>
</feature>
<sequence>MRTQKVFTTIDTHTGGNPTRTLISGLPKLLGETMAEKMLHMKKEYDWIRKLLMNEPRGHDVMSGALLTDPCHPDADIGVIYIETGGYLPMCGHDTIGVCTALIESGLIPVVEPITSLKLDTPAGLVEVDIFVRDGKAKEVSFCNIPAFILKHITVDVENIGTVEADIAYGGNFYAIIDAKSVGLELVPEHASTIIDKAIHIRNIINERFEIIHPEYSFIRGLTHVEFYTDPTHESAHVKNTVVVPPGGIDRSPCGTGTSAKLAVLYANQKIEMNEEFVHESIVGSLFKGCVINTTNVANMEAVVTKITGSAWLMGMHRFFYNEKDPLKEGFLLIPPMEHETEDVK</sequence>
<keyword id="KW-1185">Reference proteome</keyword>
<dbReference type="EMBL" id="AE016879">
    <property type="protein sequence ID" value="AAP26666.1"/>
    <property type="molecule type" value="Genomic_DNA"/>
</dbReference>
<dbReference type="EMBL" id="AE017334">
    <property type="protein sequence ID" value="AAT31951.1"/>
    <property type="molecule type" value="Genomic_DNA"/>
</dbReference>
<dbReference type="EMBL" id="AE017225">
    <property type="protein sequence ID" value="AAT54953.1"/>
    <property type="molecule type" value="Genomic_DNA"/>
</dbReference>
<dbReference type="RefSeq" id="NP_845180.1">
    <property type="nucleotide sequence ID" value="NC_003997.3"/>
</dbReference>
<dbReference type="RefSeq" id="WP_001260275.1">
    <property type="nucleotide sequence ID" value="NZ_WXXJ01000026.1"/>
</dbReference>
<dbReference type="RefSeq" id="YP_028902.1">
    <property type="nucleotide sequence ID" value="NC_005945.1"/>
</dbReference>
<dbReference type="SMR" id="Q81PH1"/>
<dbReference type="STRING" id="261594.GBAA_2834"/>
<dbReference type="DNASU" id="1085580"/>
<dbReference type="GeneID" id="45022668"/>
<dbReference type="KEGG" id="ban:BA_2834"/>
<dbReference type="KEGG" id="banh:HYU01_14050"/>
<dbReference type="KEGG" id="bar:GBAA_2834"/>
<dbReference type="KEGG" id="bat:BAS2643"/>
<dbReference type="PATRIC" id="fig|198094.11.peg.2817"/>
<dbReference type="eggNOG" id="COG3938">
    <property type="taxonomic scope" value="Bacteria"/>
</dbReference>
<dbReference type="HOGENOM" id="CLU_036729_0_0_9"/>
<dbReference type="OMA" id="SHVLWTG"/>
<dbReference type="OrthoDB" id="181267at2"/>
<dbReference type="Proteomes" id="UP000000427">
    <property type="component" value="Chromosome"/>
</dbReference>
<dbReference type="Proteomes" id="UP000000594">
    <property type="component" value="Chromosome"/>
</dbReference>
<dbReference type="GO" id="GO:0047580">
    <property type="term" value="F:4-hydroxyproline epimerase activity"/>
    <property type="evidence" value="ECO:0007669"/>
    <property type="project" value="TreeGrafter"/>
</dbReference>
<dbReference type="FunFam" id="3.10.310.10:FF:000005">
    <property type="entry name" value="Proline racemase"/>
    <property type="match status" value="1"/>
</dbReference>
<dbReference type="Gene3D" id="3.10.310.10">
    <property type="entry name" value="Diaminopimelate Epimerase, Chain A, domain 1"/>
    <property type="match status" value="2"/>
</dbReference>
<dbReference type="InterPro" id="IPR008794">
    <property type="entry name" value="Pro_racemase_fam"/>
</dbReference>
<dbReference type="PANTHER" id="PTHR33442:SF5">
    <property type="entry name" value="BIFUNCTIONAL TRANS-3-HYDROXY-L-PROLINE DEHYDRATASE_2-EPIMERASE"/>
    <property type="match status" value="1"/>
</dbReference>
<dbReference type="PANTHER" id="PTHR33442">
    <property type="entry name" value="TRANS-3-HYDROXY-L-PROLINE DEHYDRATASE"/>
    <property type="match status" value="1"/>
</dbReference>
<dbReference type="Pfam" id="PF05544">
    <property type="entry name" value="Pro_racemase"/>
    <property type="match status" value="1"/>
</dbReference>
<dbReference type="PIRSF" id="PIRSF029792">
    <property type="entry name" value="Pro_racemase"/>
    <property type="match status" value="1"/>
</dbReference>
<dbReference type="SFLD" id="SFLDS00028">
    <property type="entry name" value="Proline_Racemase"/>
    <property type="match status" value="1"/>
</dbReference>
<dbReference type="SUPFAM" id="SSF54506">
    <property type="entry name" value="Diaminopimelate epimerase-like"/>
    <property type="match status" value="1"/>
</dbReference>
<reference key="1">
    <citation type="journal article" date="2003" name="Nature">
        <title>The genome sequence of Bacillus anthracis Ames and comparison to closely related bacteria.</title>
        <authorList>
            <person name="Read T.D."/>
            <person name="Peterson S.N."/>
            <person name="Tourasse N.J."/>
            <person name="Baillie L.W."/>
            <person name="Paulsen I.T."/>
            <person name="Nelson K.E."/>
            <person name="Tettelin H."/>
            <person name="Fouts D.E."/>
            <person name="Eisen J.A."/>
            <person name="Gill S.R."/>
            <person name="Holtzapple E.K."/>
            <person name="Okstad O.A."/>
            <person name="Helgason E."/>
            <person name="Rilstone J."/>
            <person name="Wu M."/>
            <person name="Kolonay J.F."/>
            <person name="Beanan M.J."/>
            <person name="Dodson R.J."/>
            <person name="Brinkac L.M."/>
            <person name="Gwinn M.L."/>
            <person name="DeBoy R.T."/>
            <person name="Madpu R."/>
            <person name="Daugherty S.C."/>
            <person name="Durkin A.S."/>
            <person name="Haft D.H."/>
            <person name="Nelson W.C."/>
            <person name="Peterson J.D."/>
            <person name="Pop M."/>
            <person name="Khouri H.M."/>
            <person name="Radune D."/>
            <person name="Benton J.L."/>
            <person name="Mahamoud Y."/>
            <person name="Jiang L."/>
            <person name="Hance I.R."/>
            <person name="Weidman J.F."/>
            <person name="Berry K.J."/>
            <person name="Plaut R.D."/>
            <person name="Wolf A.M."/>
            <person name="Watkins K.L."/>
            <person name="Nierman W.C."/>
            <person name="Hazen A."/>
            <person name="Cline R.T."/>
            <person name="Redmond C."/>
            <person name="Thwaite J.E."/>
            <person name="White O."/>
            <person name="Salzberg S.L."/>
            <person name="Thomason B."/>
            <person name="Friedlander A.M."/>
            <person name="Koehler T.M."/>
            <person name="Hanna P.C."/>
            <person name="Kolstoe A.-B."/>
            <person name="Fraser C.M."/>
        </authorList>
    </citation>
    <scope>NUCLEOTIDE SEQUENCE [LARGE SCALE GENOMIC DNA]</scope>
    <source>
        <strain>Ames / isolate Porton</strain>
    </source>
</reference>
<reference key="2">
    <citation type="journal article" date="2009" name="J. Bacteriol.">
        <title>The complete genome sequence of Bacillus anthracis Ames 'Ancestor'.</title>
        <authorList>
            <person name="Ravel J."/>
            <person name="Jiang L."/>
            <person name="Stanley S.T."/>
            <person name="Wilson M.R."/>
            <person name="Decker R.S."/>
            <person name="Read T.D."/>
            <person name="Worsham P."/>
            <person name="Keim P.S."/>
            <person name="Salzberg S.L."/>
            <person name="Fraser-Liggett C.M."/>
            <person name="Rasko D.A."/>
        </authorList>
    </citation>
    <scope>NUCLEOTIDE SEQUENCE [LARGE SCALE GENOMIC DNA]</scope>
    <source>
        <strain>Ames ancestor</strain>
    </source>
</reference>
<reference key="3">
    <citation type="submission" date="2004-01" db="EMBL/GenBank/DDBJ databases">
        <title>Complete genome sequence of Bacillus anthracis Sterne.</title>
        <authorList>
            <person name="Brettin T.S."/>
            <person name="Bruce D."/>
            <person name="Challacombe J.F."/>
            <person name="Gilna P."/>
            <person name="Han C."/>
            <person name="Hill K."/>
            <person name="Hitchcock P."/>
            <person name="Jackson P."/>
            <person name="Keim P."/>
            <person name="Longmire J."/>
            <person name="Lucas S."/>
            <person name="Okinaka R."/>
            <person name="Richardson P."/>
            <person name="Rubin E."/>
            <person name="Tice H."/>
        </authorList>
    </citation>
    <scope>NUCLEOTIDE SEQUENCE [LARGE SCALE GENOMIC DNA]</scope>
    <source>
        <strain>Sterne</strain>
    </source>
</reference>
<reference key="4">
    <citation type="journal article" date="2007" name="PLoS ONE">
        <title>Molecular and structural discrimination of proline racemase and hydroxyproline-2-epimerase from nosocomial and bacterial pathogens.</title>
        <authorList>
            <person name="Goytia M."/>
            <person name="Chamond N."/>
            <person name="Cosson A."/>
            <person name="Coatnoan N."/>
            <person name="Hermant D."/>
            <person name="Berneman A."/>
            <person name="Minoprio P."/>
        </authorList>
    </citation>
    <scope>LACK OF ENZYMATIC ACTIVITY AS PROLINE RACEMASE AND HYDROXYPROLINE-2-EPIMERASE</scope>
    <source>
        <strain>9131</strain>
    </source>
</reference>
<organism>
    <name type="scientific">Bacillus anthracis</name>
    <dbReference type="NCBI Taxonomy" id="1392"/>
    <lineage>
        <taxon>Bacteria</taxon>
        <taxon>Bacillati</taxon>
        <taxon>Bacillota</taxon>
        <taxon>Bacilli</taxon>
        <taxon>Bacillales</taxon>
        <taxon>Bacillaceae</taxon>
        <taxon>Bacillus</taxon>
        <taxon>Bacillus cereus group</taxon>
    </lineage>
</organism>
<gene>
    <name type="ordered locus">BA_2834</name>
    <name type="ordered locus">GBAA_2834</name>
    <name type="ordered locus">BAS2643</name>
</gene>
<comment type="similarity">
    <text evidence="1">Belongs to the proline racemase family.</text>
</comment>
<comment type="caution">
    <text evidence="1">This protein does not possess neither proline racemase nor hydroxyproline-2-epimerase activities.</text>
</comment>
<proteinExistence type="evidence at protein level"/>
<accession>Q81PH1</accession>
<accession>Q6HXN6</accession>
<accession>Q6KRR0</accession>